<protein>
    <recommendedName>
        <fullName>Putative cytochrome c oxidase subunit 6b-like</fullName>
    </recommendedName>
</protein>
<accession>Q9LPJ2</accession>
<accession>F4IEB8</accession>
<name>CX6BL_ARATH</name>
<dbReference type="EMBL" id="AC017118">
    <property type="protein sequence ID" value="AAF25969.1"/>
    <property type="status" value="ALT_SEQ"/>
    <property type="molecule type" value="Genomic_DNA"/>
</dbReference>
<dbReference type="EMBL" id="CP002684">
    <property type="protein sequence ID" value="AEE31520.1"/>
    <property type="molecule type" value="Genomic_DNA"/>
</dbReference>
<dbReference type="RefSeq" id="NP_174548.1">
    <property type="nucleotide sequence ID" value="NM_103005.1"/>
</dbReference>
<dbReference type="SMR" id="Q9LPJ2"/>
<dbReference type="FunCoup" id="Q9LPJ2">
    <property type="interactions" value="32"/>
</dbReference>
<dbReference type="STRING" id="3702.Q9LPJ2"/>
<dbReference type="PaxDb" id="3702-AT1G32710.1"/>
<dbReference type="ProteomicsDB" id="220431"/>
<dbReference type="EnsemblPlants" id="AT1G32710.1">
    <property type="protein sequence ID" value="AT1G32710.1"/>
    <property type="gene ID" value="AT1G32710"/>
</dbReference>
<dbReference type="GeneID" id="840165"/>
<dbReference type="Gramene" id="AT1G32710.1">
    <property type="protein sequence ID" value="AT1G32710.1"/>
    <property type="gene ID" value="AT1G32710"/>
</dbReference>
<dbReference type="KEGG" id="ath:AT1G32710"/>
<dbReference type="Araport" id="AT1G32710"/>
<dbReference type="TAIR" id="AT1G32710"/>
<dbReference type="eggNOG" id="KOG3057">
    <property type="taxonomic scope" value="Eukaryota"/>
</dbReference>
<dbReference type="HOGENOM" id="CLU_139387_0_0_1"/>
<dbReference type="InParanoid" id="Q9LPJ2"/>
<dbReference type="OMA" id="ETRHCFN"/>
<dbReference type="PRO" id="PR:Q9LPJ2"/>
<dbReference type="Proteomes" id="UP000006548">
    <property type="component" value="Chromosome 1"/>
</dbReference>
<dbReference type="ExpressionAtlas" id="Q9LPJ2">
    <property type="expression patterns" value="baseline and differential"/>
</dbReference>
<dbReference type="GO" id="GO:0005739">
    <property type="term" value="C:mitochondrion"/>
    <property type="evidence" value="ECO:0007669"/>
    <property type="project" value="UniProtKB-SubCell"/>
</dbReference>
<dbReference type="GO" id="GO:0045277">
    <property type="term" value="C:respiratory chain complex IV"/>
    <property type="evidence" value="ECO:0007669"/>
    <property type="project" value="InterPro"/>
</dbReference>
<dbReference type="CDD" id="cd00926">
    <property type="entry name" value="Cyt_c_Oxidase_VIb"/>
    <property type="match status" value="1"/>
</dbReference>
<dbReference type="Gene3D" id="1.10.10.140">
    <property type="entry name" value="Cytochrome c oxidase, subunit VIb"/>
    <property type="match status" value="1"/>
</dbReference>
<dbReference type="InterPro" id="IPR048280">
    <property type="entry name" value="COX6B-like"/>
</dbReference>
<dbReference type="InterPro" id="IPR036549">
    <property type="entry name" value="CX6/COA6-like_sf"/>
</dbReference>
<dbReference type="InterPro" id="IPR003213">
    <property type="entry name" value="Cyt_c_oxidase_su6B"/>
</dbReference>
<dbReference type="PANTHER" id="PTHR46281">
    <property type="entry name" value="CYTOCHROME C OXIDASE SUBUNIT 6B"/>
    <property type="match status" value="1"/>
</dbReference>
<dbReference type="PANTHER" id="PTHR46281:SF11">
    <property type="entry name" value="CYTOCHROME C OXIDASE SUBUNIT 6B-LIKE-RELATED"/>
    <property type="match status" value="1"/>
</dbReference>
<dbReference type="Pfam" id="PF02297">
    <property type="entry name" value="COX6B"/>
    <property type="match status" value="1"/>
</dbReference>
<dbReference type="SUPFAM" id="SSF47694">
    <property type="entry name" value="Cytochrome c oxidase subunit h"/>
    <property type="match status" value="1"/>
</dbReference>
<dbReference type="PROSITE" id="PS51808">
    <property type="entry name" value="CHCH"/>
    <property type="match status" value="1"/>
</dbReference>
<keyword id="KW-1015">Disulfide bond</keyword>
<keyword id="KW-0496">Mitochondrion</keyword>
<keyword id="KW-1185">Reference proteome</keyword>
<organism>
    <name type="scientific">Arabidopsis thaliana</name>
    <name type="common">Mouse-ear cress</name>
    <dbReference type="NCBI Taxonomy" id="3702"/>
    <lineage>
        <taxon>Eukaryota</taxon>
        <taxon>Viridiplantae</taxon>
        <taxon>Streptophyta</taxon>
        <taxon>Embryophyta</taxon>
        <taxon>Tracheophyta</taxon>
        <taxon>Spermatophyta</taxon>
        <taxon>Magnoliopsida</taxon>
        <taxon>eudicotyledons</taxon>
        <taxon>Gunneridae</taxon>
        <taxon>Pentapetalae</taxon>
        <taxon>rosids</taxon>
        <taxon>malvids</taxon>
        <taxon>Brassicales</taxon>
        <taxon>Brassicaceae</taxon>
        <taxon>Camelineae</taxon>
        <taxon>Arabidopsis</taxon>
    </lineage>
</organism>
<evidence type="ECO:0000250" key="1"/>
<evidence type="ECO:0000255" key="2">
    <source>
        <dbReference type="PROSITE-ProRule" id="PRU01150"/>
    </source>
</evidence>
<evidence type="ECO:0000256" key="3">
    <source>
        <dbReference type="SAM" id="MobiDB-lite"/>
    </source>
</evidence>
<evidence type="ECO:0000305" key="4"/>
<comment type="function">
    <text evidence="1">This protein is one of the nuclear-coded polypeptide chains of cytochrome c oxidase, the terminal oxidase in mitochondrial electron transport. This protein may be one of the heme-binding subunits of the oxidase (By similarity).</text>
</comment>
<comment type="subcellular location">
    <subcellularLocation>
        <location evidence="1">Mitochondrion</location>
    </subcellularLocation>
</comment>
<comment type="similarity">
    <text evidence="4">Belongs to the cytochrome c oxidase subunit 6B (TC 3.D.4.8) family.</text>
</comment>
<comment type="sequence caution" evidence="4">
    <conflict type="erroneous gene model prediction">
        <sequence resource="EMBL-CDS" id="AAF25969"/>
    </conflict>
</comment>
<proteinExistence type="inferred from homology"/>
<gene>
    <name type="ordered locus">At1g32710</name>
    <name type="ORF">F6N18.10</name>
</gene>
<reference key="1">
    <citation type="journal article" date="2000" name="Nature">
        <title>Sequence and analysis of chromosome 1 of the plant Arabidopsis thaliana.</title>
        <authorList>
            <person name="Theologis A."/>
            <person name="Ecker J.R."/>
            <person name="Palm C.J."/>
            <person name="Federspiel N.A."/>
            <person name="Kaul S."/>
            <person name="White O."/>
            <person name="Alonso J."/>
            <person name="Altafi H."/>
            <person name="Araujo R."/>
            <person name="Bowman C.L."/>
            <person name="Brooks S.Y."/>
            <person name="Buehler E."/>
            <person name="Chan A."/>
            <person name="Chao Q."/>
            <person name="Chen H."/>
            <person name="Cheuk R.F."/>
            <person name="Chin C.W."/>
            <person name="Chung M.K."/>
            <person name="Conn L."/>
            <person name="Conway A.B."/>
            <person name="Conway A.R."/>
            <person name="Creasy T.H."/>
            <person name="Dewar K."/>
            <person name="Dunn P."/>
            <person name="Etgu P."/>
            <person name="Feldblyum T.V."/>
            <person name="Feng J.-D."/>
            <person name="Fong B."/>
            <person name="Fujii C.Y."/>
            <person name="Gill J.E."/>
            <person name="Goldsmith A.D."/>
            <person name="Haas B."/>
            <person name="Hansen N.F."/>
            <person name="Hughes B."/>
            <person name="Huizar L."/>
            <person name="Hunter J.L."/>
            <person name="Jenkins J."/>
            <person name="Johnson-Hopson C."/>
            <person name="Khan S."/>
            <person name="Khaykin E."/>
            <person name="Kim C.J."/>
            <person name="Koo H.L."/>
            <person name="Kremenetskaia I."/>
            <person name="Kurtz D.B."/>
            <person name="Kwan A."/>
            <person name="Lam B."/>
            <person name="Langin-Hooper S."/>
            <person name="Lee A."/>
            <person name="Lee J.M."/>
            <person name="Lenz C.A."/>
            <person name="Li J.H."/>
            <person name="Li Y.-P."/>
            <person name="Lin X."/>
            <person name="Liu S.X."/>
            <person name="Liu Z.A."/>
            <person name="Luros J.S."/>
            <person name="Maiti R."/>
            <person name="Marziali A."/>
            <person name="Militscher J."/>
            <person name="Miranda M."/>
            <person name="Nguyen M."/>
            <person name="Nierman W.C."/>
            <person name="Osborne B.I."/>
            <person name="Pai G."/>
            <person name="Peterson J."/>
            <person name="Pham P.K."/>
            <person name="Rizzo M."/>
            <person name="Rooney T."/>
            <person name="Rowley D."/>
            <person name="Sakano H."/>
            <person name="Salzberg S.L."/>
            <person name="Schwartz J.R."/>
            <person name="Shinn P."/>
            <person name="Southwick A.M."/>
            <person name="Sun H."/>
            <person name="Tallon L.J."/>
            <person name="Tambunga G."/>
            <person name="Toriumi M.J."/>
            <person name="Town C.D."/>
            <person name="Utterback T."/>
            <person name="Van Aken S."/>
            <person name="Vaysberg M."/>
            <person name="Vysotskaia V.S."/>
            <person name="Walker M."/>
            <person name="Wu D."/>
            <person name="Yu G."/>
            <person name="Fraser C.M."/>
            <person name="Venter J.C."/>
            <person name="Davis R.W."/>
        </authorList>
    </citation>
    <scope>NUCLEOTIDE SEQUENCE [LARGE SCALE GENOMIC DNA]</scope>
    <source>
        <strain>cv. Columbia</strain>
    </source>
</reference>
<reference key="2">
    <citation type="journal article" date="2017" name="Plant J.">
        <title>Araport11: a complete reannotation of the Arabidopsis thaliana reference genome.</title>
        <authorList>
            <person name="Cheng C.Y."/>
            <person name="Krishnakumar V."/>
            <person name="Chan A.P."/>
            <person name="Thibaud-Nissen F."/>
            <person name="Schobel S."/>
            <person name="Town C.D."/>
        </authorList>
    </citation>
    <scope>GENOME REANNOTATION</scope>
    <source>
        <strain>cv. Columbia</strain>
    </source>
</reference>
<sequence length="134" mass="15480">MSSAQMDPHDKMRSRDISKVARGQQAPRPAHTPGTVSPPPENEATFRAKRGDSGRETDAAVEERFPVTNETRHCFNRFMQYHKCIEKNGRDANDCNNLRDYVRSICPEELVSKIWLKSGRNKESQGHYQRQYED</sequence>
<feature type="chain" id="PRO_0000412236" description="Putative cytochrome c oxidase subunit 6b-like">
    <location>
        <begin position="1"/>
        <end position="134"/>
    </location>
</feature>
<feature type="domain" description="CHCH" evidence="2">
    <location>
        <begin position="71"/>
        <end position="114"/>
    </location>
</feature>
<feature type="region of interest" description="Disordered" evidence="3">
    <location>
        <begin position="1"/>
        <end position="61"/>
    </location>
</feature>
<feature type="short sequence motif" description="Cx9C motif" evidence="2">
    <location>
        <begin position="74"/>
        <end position="84"/>
    </location>
</feature>
<feature type="short sequence motif" description="Cx10C motif" evidence="2">
    <location>
        <begin position="95"/>
        <end position="106"/>
    </location>
</feature>
<feature type="compositionally biased region" description="Basic and acidic residues" evidence="3">
    <location>
        <begin position="7"/>
        <end position="19"/>
    </location>
</feature>
<feature type="compositionally biased region" description="Basic and acidic residues" evidence="3">
    <location>
        <begin position="44"/>
        <end position="61"/>
    </location>
</feature>
<feature type="disulfide bond" evidence="2">
    <location>
        <begin position="74"/>
        <end position="106"/>
    </location>
</feature>
<feature type="disulfide bond" evidence="2">
    <location>
        <begin position="84"/>
        <end position="95"/>
    </location>
</feature>